<reference key="1">
    <citation type="journal article" date="2010" name="Nature">
        <title>The sequence and de novo assembly of the giant panda genome.</title>
        <authorList>
            <person name="Li R."/>
            <person name="Fan W."/>
            <person name="Tian G."/>
            <person name="Zhu H."/>
            <person name="He L."/>
            <person name="Cai J."/>
            <person name="Huang Q."/>
            <person name="Cai Q."/>
            <person name="Li B."/>
            <person name="Bai Y."/>
            <person name="Zhang Z."/>
            <person name="Zhang Y."/>
            <person name="Wang W."/>
            <person name="Li J."/>
            <person name="Wei F."/>
            <person name="Li H."/>
            <person name="Jian M."/>
            <person name="Li J."/>
            <person name="Zhang Z."/>
            <person name="Nielsen R."/>
            <person name="Li D."/>
            <person name="Gu W."/>
            <person name="Yang Z."/>
            <person name="Xuan Z."/>
            <person name="Ryder O.A."/>
            <person name="Leung F.C."/>
            <person name="Zhou Y."/>
            <person name="Cao J."/>
            <person name="Sun X."/>
            <person name="Fu Y."/>
            <person name="Fang X."/>
            <person name="Guo X."/>
            <person name="Wang B."/>
            <person name="Hou R."/>
            <person name="Shen F."/>
            <person name="Mu B."/>
            <person name="Ni P."/>
            <person name="Lin R."/>
            <person name="Qian W."/>
            <person name="Wang G."/>
            <person name="Yu C."/>
            <person name="Nie W."/>
            <person name="Wang J."/>
            <person name="Wu Z."/>
            <person name="Liang H."/>
            <person name="Min J."/>
            <person name="Wu Q."/>
            <person name="Cheng S."/>
            <person name="Ruan J."/>
            <person name="Wang M."/>
            <person name="Shi Z."/>
            <person name="Wen M."/>
            <person name="Liu B."/>
            <person name="Ren X."/>
            <person name="Zheng H."/>
            <person name="Dong D."/>
            <person name="Cook K."/>
            <person name="Shan G."/>
            <person name="Zhang H."/>
            <person name="Kosiol C."/>
            <person name="Xie X."/>
            <person name="Lu Z."/>
            <person name="Zheng H."/>
            <person name="Li Y."/>
            <person name="Steiner C.C."/>
            <person name="Lam T.T."/>
            <person name="Lin S."/>
            <person name="Zhang Q."/>
            <person name="Li G."/>
            <person name="Tian J."/>
            <person name="Gong T."/>
            <person name="Liu H."/>
            <person name="Zhang D."/>
            <person name="Fang L."/>
            <person name="Ye C."/>
            <person name="Zhang J."/>
            <person name="Hu W."/>
            <person name="Xu A."/>
            <person name="Ren Y."/>
            <person name="Zhang G."/>
            <person name="Bruford M.W."/>
            <person name="Li Q."/>
            <person name="Ma L."/>
            <person name="Guo Y."/>
            <person name="An N."/>
            <person name="Hu Y."/>
            <person name="Zheng Y."/>
            <person name="Shi Y."/>
            <person name="Li Z."/>
            <person name="Liu Q."/>
            <person name="Chen Y."/>
            <person name="Zhao J."/>
            <person name="Qu N."/>
            <person name="Zhao S."/>
            <person name="Tian F."/>
            <person name="Wang X."/>
            <person name="Wang H."/>
            <person name="Xu L."/>
            <person name="Liu X."/>
            <person name="Vinar T."/>
            <person name="Wang Y."/>
            <person name="Lam T.W."/>
            <person name="Yiu S.M."/>
            <person name="Liu S."/>
            <person name="Zhang H."/>
            <person name="Li D."/>
            <person name="Huang Y."/>
            <person name="Wang X."/>
            <person name="Yang G."/>
            <person name="Jiang Z."/>
            <person name="Wang J."/>
            <person name="Qin N."/>
            <person name="Li L."/>
            <person name="Li J."/>
            <person name="Bolund L."/>
            <person name="Kristiansen K."/>
            <person name="Wong G.K."/>
            <person name="Olson M."/>
            <person name="Zhang X."/>
            <person name="Li S."/>
            <person name="Yang H."/>
            <person name="Wang J."/>
            <person name="Wang J."/>
        </authorList>
    </citation>
    <scope>NUCLEOTIDE SEQUENCE [LARGE SCALE GENOMIC DNA]</scope>
</reference>
<reference key="2">
    <citation type="unpublished observations" date="2013-11">
        <authorList>
            <person name="Puppione D.L."/>
        </authorList>
    </citation>
    <scope>IDENTIFICATION</scope>
</reference>
<evidence type="ECO:0000250" key="1"/>
<evidence type="ECO:0000250" key="2">
    <source>
        <dbReference type="UniProtKB" id="G5BQH5"/>
    </source>
</evidence>
<evidence type="ECO:0000250" key="3">
    <source>
        <dbReference type="UniProtKB" id="P02647"/>
    </source>
</evidence>
<evidence type="ECO:0000250" key="4">
    <source>
        <dbReference type="UniProtKB" id="P04639"/>
    </source>
</evidence>
<evidence type="ECO:0000305" key="5"/>
<protein>
    <recommendedName>
        <fullName>Apolipoprotein A-I</fullName>
        <shortName>Apo-AI</shortName>
        <shortName>ApoA-I</shortName>
    </recommendedName>
    <alternativeName>
        <fullName>Apolipoprotein A1</fullName>
    </alternativeName>
    <component>
        <recommendedName>
            <fullName>Proapolipoprotein A-I</fullName>
            <shortName>ProapoA-I</shortName>
        </recommendedName>
    </component>
    <component>
        <recommendedName>
            <fullName>Truncated apolipoprotein A-I</fullName>
        </recommendedName>
    </component>
</protein>
<dbReference type="EMBL" id="ACTA01112696">
    <property type="status" value="NOT_ANNOTATED_CDS"/>
    <property type="molecule type" value="Genomic_DNA"/>
</dbReference>
<dbReference type="EMBL" id="GL192677">
    <property type="protein sequence ID" value="EFB21763.1"/>
    <property type="molecule type" value="Genomic_DNA"/>
</dbReference>
<dbReference type="RefSeq" id="XP_002919539.1">
    <property type="nucleotide sequence ID" value="XM_002919493.3"/>
</dbReference>
<dbReference type="RefSeq" id="XP_034521703.1">
    <property type="nucleotide sequence ID" value="XM_034665812.1"/>
</dbReference>
<dbReference type="RefSeq" id="XP_034521704.1">
    <property type="nucleotide sequence ID" value="XM_034665813.1"/>
</dbReference>
<dbReference type="SMR" id="D2HC77"/>
<dbReference type="FunCoup" id="D2HC77">
    <property type="interactions" value="3"/>
</dbReference>
<dbReference type="STRING" id="9646.ENSAMEP00000009115"/>
<dbReference type="Ensembl" id="ENSAMET00000025841.1">
    <property type="protein sequence ID" value="ENSAMEP00000035554.1"/>
    <property type="gene ID" value="ENSAMEG00000008662.2"/>
</dbReference>
<dbReference type="Ensembl" id="ENSAMET00000035218.1">
    <property type="protein sequence ID" value="ENSAMEP00000040924.1"/>
    <property type="gene ID" value="ENSAMEG00000008662.2"/>
</dbReference>
<dbReference type="GeneID" id="100477643"/>
<dbReference type="eggNOG" id="ENOG502S1XQ">
    <property type="taxonomic scope" value="Eukaryota"/>
</dbReference>
<dbReference type="GeneTree" id="ENSGT00950000182929"/>
<dbReference type="HOGENOM" id="CLU_058447_1_0_1"/>
<dbReference type="InParanoid" id="D2HC77"/>
<dbReference type="OMA" id="EYVAQFE"/>
<dbReference type="OrthoDB" id="8727817at2759"/>
<dbReference type="TreeFam" id="TF334458"/>
<dbReference type="Proteomes" id="UP000008912">
    <property type="component" value="Unassembled WGS sequence"/>
</dbReference>
<dbReference type="GO" id="GO:0042627">
    <property type="term" value="C:chylomicron"/>
    <property type="evidence" value="ECO:0007669"/>
    <property type="project" value="TreeGrafter"/>
</dbReference>
<dbReference type="GO" id="GO:0030139">
    <property type="term" value="C:endocytic vesicle"/>
    <property type="evidence" value="ECO:0007669"/>
    <property type="project" value="Ensembl"/>
</dbReference>
<dbReference type="GO" id="GO:1903561">
    <property type="term" value="C:extracellular vesicle"/>
    <property type="evidence" value="ECO:0007669"/>
    <property type="project" value="TreeGrafter"/>
</dbReference>
<dbReference type="GO" id="GO:0034362">
    <property type="term" value="C:low-density lipoprotein particle"/>
    <property type="evidence" value="ECO:0007669"/>
    <property type="project" value="TreeGrafter"/>
</dbReference>
<dbReference type="GO" id="GO:0034366">
    <property type="term" value="C:spherical high-density lipoprotein particle"/>
    <property type="evidence" value="ECO:0007669"/>
    <property type="project" value="Ensembl"/>
</dbReference>
<dbReference type="GO" id="GO:0034361">
    <property type="term" value="C:very-low-density lipoprotein particle"/>
    <property type="evidence" value="ECO:0007669"/>
    <property type="project" value="Ensembl"/>
</dbReference>
<dbReference type="GO" id="GO:0001540">
    <property type="term" value="F:amyloid-beta binding"/>
    <property type="evidence" value="ECO:0007669"/>
    <property type="project" value="Ensembl"/>
</dbReference>
<dbReference type="GO" id="GO:0034191">
    <property type="term" value="F:apolipoprotein A-I receptor binding"/>
    <property type="evidence" value="ECO:0007669"/>
    <property type="project" value="Ensembl"/>
</dbReference>
<dbReference type="GO" id="GO:0045499">
    <property type="term" value="F:chemorepellent activity"/>
    <property type="evidence" value="ECO:0007669"/>
    <property type="project" value="Ensembl"/>
</dbReference>
<dbReference type="GO" id="GO:0015485">
    <property type="term" value="F:cholesterol binding"/>
    <property type="evidence" value="ECO:0007669"/>
    <property type="project" value="Ensembl"/>
</dbReference>
<dbReference type="GO" id="GO:0120020">
    <property type="term" value="F:cholesterol transfer activity"/>
    <property type="evidence" value="ECO:0007669"/>
    <property type="project" value="Ensembl"/>
</dbReference>
<dbReference type="GO" id="GO:0019899">
    <property type="term" value="F:enzyme binding"/>
    <property type="evidence" value="ECO:0007669"/>
    <property type="project" value="Ensembl"/>
</dbReference>
<dbReference type="GO" id="GO:0031072">
    <property type="term" value="F:heat shock protein binding"/>
    <property type="evidence" value="ECO:0007669"/>
    <property type="project" value="Ensembl"/>
</dbReference>
<dbReference type="GO" id="GO:0008035">
    <property type="term" value="F:high-density lipoprotein particle binding"/>
    <property type="evidence" value="ECO:0007669"/>
    <property type="project" value="Ensembl"/>
</dbReference>
<dbReference type="GO" id="GO:0070653">
    <property type="term" value="F:high-density lipoprotein particle receptor binding"/>
    <property type="evidence" value="ECO:0007669"/>
    <property type="project" value="Ensembl"/>
</dbReference>
<dbReference type="GO" id="GO:0060228">
    <property type="term" value="F:phosphatidylcholine-sterol O-acyltransferase activator activity"/>
    <property type="evidence" value="ECO:0007669"/>
    <property type="project" value="Ensembl"/>
</dbReference>
<dbReference type="GO" id="GO:0005543">
    <property type="term" value="F:phospholipid binding"/>
    <property type="evidence" value="ECO:0007669"/>
    <property type="project" value="Ensembl"/>
</dbReference>
<dbReference type="GO" id="GO:0042803">
    <property type="term" value="F:protein homodimerization activity"/>
    <property type="evidence" value="ECO:0000250"/>
    <property type="project" value="UniProtKB"/>
</dbReference>
<dbReference type="GO" id="GO:0030325">
    <property type="term" value="P:adrenal gland development"/>
    <property type="evidence" value="ECO:0007669"/>
    <property type="project" value="Ensembl"/>
</dbReference>
<dbReference type="GO" id="GO:0034205">
    <property type="term" value="P:amyloid-beta formation"/>
    <property type="evidence" value="ECO:0007669"/>
    <property type="project" value="Ensembl"/>
</dbReference>
<dbReference type="GO" id="GO:0043534">
    <property type="term" value="P:blood vessel endothelial cell migration"/>
    <property type="evidence" value="ECO:0007669"/>
    <property type="project" value="Ensembl"/>
</dbReference>
<dbReference type="GO" id="GO:0071402">
    <property type="term" value="P:cellular response to lipoprotein particle stimulus"/>
    <property type="evidence" value="ECO:0007669"/>
    <property type="project" value="Ensembl"/>
</dbReference>
<dbReference type="GO" id="GO:0006695">
    <property type="term" value="P:cholesterol biosynthetic process"/>
    <property type="evidence" value="ECO:0007669"/>
    <property type="project" value="Ensembl"/>
</dbReference>
<dbReference type="GO" id="GO:0033344">
    <property type="term" value="P:cholesterol efflux"/>
    <property type="evidence" value="ECO:0007669"/>
    <property type="project" value="Ensembl"/>
</dbReference>
<dbReference type="GO" id="GO:0042632">
    <property type="term" value="P:cholesterol homeostasis"/>
    <property type="evidence" value="ECO:0007669"/>
    <property type="project" value="Ensembl"/>
</dbReference>
<dbReference type="GO" id="GO:0070508">
    <property type="term" value="P:cholesterol import"/>
    <property type="evidence" value="ECO:0007669"/>
    <property type="project" value="Ensembl"/>
</dbReference>
<dbReference type="GO" id="GO:0001935">
    <property type="term" value="P:endothelial cell proliferation"/>
    <property type="evidence" value="ECO:0007669"/>
    <property type="project" value="Ensembl"/>
</dbReference>
<dbReference type="GO" id="GO:0007186">
    <property type="term" value="P:G protein-coupled receptor signaling pathway"/>
    <property type="evidence" value="ECO:0007669"/>
    <property type="project" value="Ensembl"/>
</dbReference>
<dbReference type="GO" id="GO:0008211">
    <property type="term" value="P:glucocorticoid metabolic process"/>
    <property type="evidence" value="ECO:0007669"/>
    <property type="project" value="Ensembl"/>
</dbReference>
<dbReference type="GO" id="GO:0034380">
    <property type="term" value="P:high-density lipoprotein particle assembly"/>
    <property type="evidence" value="ECO:0007669"/>
    <property type="project" value="Ensembl"/>
</dbReference>
<dbReference type="GO" id="GO:0034375">
    <property type="term" value="P:high-density lipoprotein particle remodeling"/>
    <property type="evidence" value="ECO:0007669"/>
    <property type="project" value="Ensembl"/>
</dbReference>
<dbReference type="GO" id="GO:0007229">
    <property type="term" value="P:integrin-mediated signaling pathway"/>
    <property type="evidence" value="ECO:0007669"/>
    <property type="project" value="Ensembl"/>
</dbReference>
<dbReference type="GO" id="GO:0019915">
    <property type="term" value="P:lipid storage"/>
    <property type="evidence" value="ECO:0007669"/>
    <property type="project" value="Ensembl"/>
</dbReference>
<dbReference type="GO" id="GO:0042158">
    <property type="term" value="P:lipoprotein biosynthetic process"/>
    <property type="evidence" value="ECO:0007669"/>
    <property type="project" value="Ensembl"/>
</dbReference>
<dbReference type="GO" id="GO:0060354">
    <property type="term" value="P:negative regulation of cell adhesion molecule production"/>
    <property type="evidence" value="ECO:0007669"/>
    <property type="project" value="Ensembl"/>
</dbReference>
<dbReference type="GO" id="GO:0002719">
    <property type="term" value="P:negative regulation of cytokine production involved in immune response"/>
    <property type="evidence" value="ECO:0007669"/>
    <property type="project" value="Ensembl"/>
</dbReference>
<dbReference type="GO" id="GO:0034115">
    <property type="term" value="P:negative regulation of heterotypic cell-cell adhesion"/>
    <property type="evidence" value="ECO:0007669"/>
    <property type="project" value="Ensembl"/>
</dbReference>
<dbReference type="GO" id="GO:0050728">
    <property type="term" value="P:negative regulation of inflammatory response"/>
    <property type="evidence" value="ECO:0007669"/>
    <property type="project" value="Ensembl"/>
</dbReference>
<dbReference type="GO" id="GO:0032691">
    <property type="term" value="P:negative regulation of interleukin-1 beta production"/>
    <property type="evidence" value="ECO:0007669"/>
    <property type="project" value="Ensembl"/>
</dbReference>
<dbReference type="GO" id="GO:0010804">
    <property type="term" value="P:negative regulation of tumor necrosis factor-mediated signaling pathway"/>
    <property type="evidence" value="ECO:0007669"/>
    <property type="project" value="Ensembl"/>
</dbReference>
<dbReference type="GO" id="GO:0010903">
    <property type="term" value="P:negative regulation of very-low-density lipoprotein particle remodeling"/>
    <property type="evidence" value="ECO:0007669"/>
    <property type="project" value="Ensembl"/>
</dbReference>
<dbReference type="GO" id="GO:0006656">
    <property type="term" value="P:phosphatidylcholine biosynthetic process"/>
    <property type="evidence" value="ECO:0007669"/>
    <property type="project" value="Ensembl"/>
</dbReference>
<dbReference type="GO" id="GO:0033700">
    <property type="term" value="P:phospholipid efflux"/>
    <property type="evidence" value="ECO:0007669"/>
    <property type="project" value="Ensembl"/>
</dbReference>
<dbReference type="GO" id="GO:0055091">
    <property type="term" value="P:phospholipid homeostasis"/>
    <property type="evidence" value="ECO:0007669"/>
    <property type="project" value="Ensembl"/>
</dbReference>
<dbReference type="GO" id="GO:0010875">
    <property type="term" value="P:positive regulation of cholesterol efflux"/>
    <property type="evidence" value="ECO:0000250"/>
    <property type="project" value="UniProtKB"/>
</dbReference>
<dbReference type="GO" id="GO:0090205">
    <property type="term" value="P:positive regulation of cholesterol metabolic process"/>
    <property type="evidence" value="ECO:0007669"/>
    <property type="project" value="Ensembl"/>
</dbReference>
<dbReference type="GO" id="GO:0050766">
    <property type="term" value="P:positive regulation of phagocytosis"/>
    <property type="evidence" value="ECO:0000250"/>
    <property type="project" value="UniProtKB"/>
</dbReference>
<dbReference type="GO" id="GO:1902995">
    <property type="term" value="P:positive regulation of phospholipid efflux"/>
    <property type="evidence" value="ECO:0000250"/>
    <property type="project" value="UniProtKB"/>
</dbReference>
<dbReference type="GO" id="GO:0035025">
    <property type="term" value="P:positive regulation of Rho protein signal transduction"/>
    <property type="evidence" value="ECO:0007669"/>
    <property type="project" value="Ensembl"/>
</dbReference>
<dbReference type="GO" id="GO:0051496">
    <property type="term" value="P:positive regulation of stress fiber assembly"/>
    <property type="evidence" value="ECO:0007669"/>
    <property type="project" value="Ensembl"/>
</dbReference>
<dbReference type="GO" id="GO:1900026">
    <property type="term" value="P:positive regulation of substrate adhesion-dependent cell spreading"/>
    <property type="evidence" value="ECO:0007669"/>
    <property type="project" value="Ensembl"/>
</dbReference>
<dbReference type="GO" id="GO:0050821">
    <property type="term" value="P:protein stabilization"/>
    <property type="evidence" value="ECO:0000250"/>
    <property type="project" value="UniProtKB"/>
</dbReference>
<dbReference type="GO" id="GO:0032489">
    <property type="term" value="P:regulation of Cdc42 protein signal transduction"/>
    <property type="evidence" value="ECO:0007669"/>
    <property type="project" value="Ensembl"/>
</dbReference>
<dbReference type="GO" id="GO:0030300">
    <property type="term" value="P:regulation of intestinal cholesterol absorption"/>
    <property type="evidence" value="ECO:0007669"/>
    <property type="project" value="Ensembl"/>
</dbReference>
<dbReference type="GO" id="GO:0043691">
    <property type="term" value="P:reverse cholesterol transport"/>
    <property type="evidence" value="ECO:0007669"/>
    <property type="project" value="Ensembl"/>
</dbReference>
<dbReference type="GO" id="GO:0070328">
    <property type="term" value="P:triglyceride homeostasis"/>
    <property type="evidence" value="ECO:0007669"/>
    <property type="project" value="Ensembl"/>
</dbReference>
<dbReference type="GO" id="GO:0051180">
    <property type="term" value="P:vitamin transport"/>
    <property type="evidence" value="ECO:0007669"/>
    <property type="project" value="Ensembl"/>
</dbReference>
<dbReference type="FunFam" id="1.20.120.20:FF:000001">
    <property type="entry name" value="Apolipoprotein A-I"/>
    <property type="match status" value="1"/>
</dbReference>
<dbReference type="FunFam" id="1.20.5.20:FF:000001">
    <property type="entry name" value="apolipoprotein A-I"/>
    <property type="match status" value="1"/>
</dbReference>
<dbReference type="Gene3D" id="1.20.5.20">
    <property type="match status" value="1"/>
</dbReference>
<dbReference type="Gene3D" id="6.10.140.380">
    <property type="match status" value="1"/>
</dbReference>
<dbReference type="Gene3D" id="1.20.120.20">
    <property type="entry name" value="Apolipoprotein"/>
    <property type="match status" value="1"/>
</dbReference>
<dbReference type="InterPro" id="IPR000074">
    <property type="entry name" value="ApoA_E"/>
</dbReference>
<dbReference type="InterPro" id="IPR050163">
    <property type="entry name" value="Apolipoprotein_A1/A4/E"/>
</dbReference>
<dbReference type="PANTHER" id="PTHR18976">
    <property type="entry name" value="APOLIPOPROTEIN"/>
    <property type="match status" value="1"/>
</dbReference>
<dbReference type="PANTHER" id="PTHR18976:SF11">
    <property type="entry name" value="APOLIPOPROTEIN A-I"/>
    <property type="match status" value="1"/>
</dbReference>
<dbReference type="Pfam" id="PF01442">
    <property type="entry name" value="Apolipoprotein"/>
    <property type="match status" value="1"/>
</dbReference>
<dbReference type="SUPFAM" id="SSF58113">
    <property type="entry name" value="Apolipoprotein A-I"/>
    <property type="match status" value="1"/>
</dbReference>
<name>APOA1_AILME</name>
<comment type="function">
    <text evidence="1">Participates in the reverse transport of cholesterol from tissues to the liver for excretion by promoting cholesterol efflux from tissues and by acting as a cofactor for the lecithin cholesterol acyltransferase (LCAT). As part of the SPAP complex, activates spermatozoa motility (By similarity).</text>
</comment>
<comment type="subunit">
    <text evidence="2 3 4">Homodimer (By similarity). Interacts with APOA1BP and CLU. Component of a sperm activating protein complex (SPAP), consisting of APOA1, an immunoglobulin heavy chain, an immunoglobulin light chain and albumin. Interacts with NDRG1. Interacts with SCGB3A2 (By similarity). Interacts with NAXE and YJEFN3 (By similarity).</text>
</comment>
<comment type="subcellular location">
    <subcellularLocation>
        <location>Secreted</location>
    </subcellularLocation>
</comment>
<comment type="tissue specificity">
    <text>Major protein of plasma HDL, also found in chylomicrons.</text>
</comment>
<comment type="PTM">
    <text evidence="1">Glycosylated.</text>
</comment>
<comment type="PTM">
    <text evidence="1">Palmitoylated.</text>
</comment>
<comment type="PTM">
    <text evidence="1">Phosphorylation sites are present in the extracellular medium.</text>
</comment>
<comment type="similarity">
    <text evidence="5">Belongs to the apolipoprotein A1/A4/E family.</text>
</comment>
<sequence>MKAVVLTLAVLFLTGSQARHFWQQDEPQSPWDRVKDLATVYVDAVKEGGRDYVAQFEASALGKQLNLKLLDNWDSLTSTVTKLREQIGPVTQEFWDNLEKETEVLRQEMSKDLEEVKQKVQPYLDEFQKNWHEEVELYRQKVAPLGAELREGARQKLQELQEKLSPLGEELRDRARIHVDALRAQLAPYSDQLRERLAARLQALKEDGGASLAEYHAKASEHLSALSEKAKPALEDLRQGLLPVLESFKVSLLAAVDEAAKKLNAQ</sequence>
<gene>
    <name type="primary">APOA1</name>
</gene>
<organism>
    <name type="scientific">Ailuropoda melanoleuca</name>
    <name type="common">Giant panda</name>
    <dbReference type="NCBI Taxonomy" id="9646"/>
    <lineage>
        <taxon>Eukaryota</taxon>
        <taxon>Metazoa</taxon>
        <taxon>Chordata</taxon>
        <taxon>Craniata</taxon>
        <taxon>Vertebrata</taxon>
        <taxon>Euteleostomi</taxon>
        <taxon>Mammalia</taxon>
        <taxon>Eutheria</taxon>
        <taxon>Laurasiatheria</taxon>
        <taxon>Carnivora</taxon>
        <taxon>Caniformia</taxon>
        <taxon>Ursidae</taxon>
        <taxon>Ailuropoda</taxon>
    </lineage>
</organism>
<feature type="signal peptide" evidence="1">
    <location>
        <begin position="1"/>
        <end position="18"/>
    </location>
</feature>
<feature type="chain" id="PRO_0000425317" description="Proapolipoprotein A-I">
    <location>
        <begin position="19"/>
        <end position="266"/>
    </location>
</feature>
<feature type="chain" id="PRO_0000425087" description="Apolipoprotein A-I">
    <location>
        <begin position="25"/>
        <end position="266"/>
    </location>
</feature>
<feature type="chain" id="PRO_0000425088" description="Truncated apolipoprotein A-I">
    <location>
        <begin position="25"/>
        <end position="265"/>
    </location>
</feature>
<feature type="repeat" description="1">
    <location>
        <begin position="67"/>
        <end position="88"/>
    </location>
</feature>
<feature type="repeat" description="2">
    <location>
        <begin position="89"/>
        <end position="110"/>
    </location>
</feature>
<feature type="repeat" description="3; half-length">
    <location>
        <begin position="111"/>
        <end position="121"/>
    </location>
</feature>
<feature type="repeat" description="4">
    <location>
        <begin position="122"/>
        <end position="142"/>
    </location>
</feature>
<feature type="repeat" description="5">
    <location>
        <begin position="144"/>
        <end position="165"/>
    </location>
</feature>
<feature type="repeat" description="6">
    <location>
        <begin position="166"/>
        <end position="187"/>
    </location>
</feature>
<feature type="repeat" description="7">
    <location>
        <begin position="188"/>
        <end position="210"/>
    </location>
</feature>
<feature type="repeat" description="8">
    <location>
        <begin position="211"/>
        <end position="231"/>
    </location>
</feature>
<feature type="repeat" description="9; half-length">
    <location>
        <begin position="232"/>
        <end position="242"/>
    </location>
</feature>
<feature type="repeat" description="10">
    <location>
        <begin position="243"/>
        <end position="266"/>
    </location>
</feature>
<feature type="region of interest" description="10 X approximate tandem repeats" evidence="1">
    <location>
        <begin position="67"/>
        <end position="266"/>
    </location>
</feature>
<feature type="modified residue" description="Methionine sulfoxide" evidence="1">
    <location>
        <position position="109"/>
    </location>
</feature>
<accession>D2HC77</accession>
<keyword id="KW-0153">Cholesterol metabolism</keyword>
<keyword id="KW-0325">Glycoprotein</keyword>
<keyword id="KW-0345">HDL</keyword>
<keyword id="KW-0443">Lipid metabolism</keyword>
<keyword id="KW-0445">Lipid transport</keyword>
<keyword id="KW-0449">Lipoprotein</keyword>
<keyword id="KW-0558">Oxidation</keyword>
<keyword id="KW-0564">Palmitate</keyword>
<keyword id="KW-0597">Phosphoprotein</keyword>
<keyword id="KW-1185">Reference proteome</keyword>
<keyword id="KW-0677">Repeat</keyword>
<keyword id="KW-0964">Secreted</keyword>
<keyword id="KW-0732">Signal</keyword>
<keyword id="KW-0753">Steroid metabolism</keyword>
<keyword id="KW-1207">Sterol metabolism</keyword>
<keyword id="KW-0813">Transport</keyword>
<proteinExistence type="evidence at transcript level"/>